<evidence type="ECO:0000255" key="1">
    <source>
        <dbReference type="HAMAP-Rule" id="MF_00011"/>
    </source>
</evidence>
<comment type="function">
    <text evidence="1">Plays an important role in the de novo pathway of purine nucleotide biosynthesis. Catalyzes the first committed step in the biosynthesis of AMP from IMP.</text>
</comment>
<comment type="catalytic activity">
    <reaction evidence="1">
        <text>IMP + L-aspartate + GTP = N(6)-(1,2-dicarboxyethyl)-AMP + GDP + phosphate + 2 H(+)</text>
        <dbReference type="Rhea" id="RHEA:15753"/>
        <dbReference type="ChEBI" id="CHEBI:15378"/>
        <dbReference type="ChEBI" id="CHEBI:29991"/>
        <dbReference type="ChEBI" id="CHEBI:37565"/>
        <dbReference type="ChEBI" id="CHEBI:43474"/>
        <dbReference type="ChEBI" id="CHEBI:57567"/>
        <dbReference type="ChEBI" id="CHEBI:58053"/>
        <dbReference type="ChEBI" id="CHEBI:58189"/>
        <dbReference type="EC" id="6.3.4.4"/>
    </reaction>
</comment>
<comment type="cofactor">
    <cofactor evidence="1">
        <name>Mg(2+)</name>
        <dbReference type="ChEBI" id="CHEBI:18420"/>
    </cofactor>
    <text evidence="1">Binds 1 Mg(2+) ion per subunit.</text>
</comment>
<comment type="pathway">
    <text evidence="1">Purine metabolism; AMP biosynthesis via de novo pathway; AMP from IMP: step 1/2.</text>
</comment>
<comment type="subunit">
    <text evidence="1">Homodimer.</text>
</comment>
<comment type="subcellular location">
    <subcellularLocation>
        <location evidence="1">Cytoplasm</location>
    </subcellularLocation>
</comment>
<comment type="similarity">
    <text evidence="1">Belongs to the adenylosuccinate synthetase family.</text>
</comment>
<gene>
    <name evidence="1" type="primary">purA</name>
    <name type="ordered locus">CLD_0858</name>
</gene>
<name>PURA_CLOBK</name>
<proteinExistence type="inferred from homology"/>
<feature type="chain" id="PRO_1000089280" description="Adenylosuccinate synthetase">
    <location>
        <begin position="1"/>
        <end position="428"/>
    </location>
</feature>
<feature type="active site" description="Proton acceptor" evidence="1">
    <location>
        <position position="13"/>
    </location>
</feature>
<feature type="active site" description="Proton donor" evidence="1">
    <location>
        <position position="41"/>
    </location>
</feature>
<feature type="binding site" evidence="1">
    <location>
        <begin position="12"/>
        <end position="18"/>
    </location>
    <ligand>
        <name>GTP</name>
        <dbReference type="ChEBI" id="CHEBI:37565"/>
    </ligand>
</feature>
<feature type="binding site" description="in other chain" evidence="1">
    <location>
        <begin position="13"/>
        <end position="16"/>
    </location>
    <ligand>
        <name>IMP</name>
        <dbReference type="ChEBI" id="CHEBI:58053"/>
        <note>ligand shared between dimeric partners</note>
    </ligand>
</feature>
<feature type="binding site" evidence="1">
    <location>
        <position position="13"/>
    </location>
    <ligand>
        <name>Mg(2+)</name>
        <dbReference type="ChEBI" id="CHEBI:18420"/>
    </ligand>
</feature>
<feature type="binding site" description="in other chain" evidence="1">
    <location>
        <begin position="38"/>
        <end position="41"/>
    </location>
    <ligand>
        <name>IMP</name>
        <dbReference type="ChEBI" id="CHEBI:58053"/>
        <note>ligand shared between dimeric partners</note>
    </ligand>
</feature>
<feature type="binding site" evidence="1">
    <location>
        <begin position="40"/>
        <end position="42"/>
    </location>
    <ligand>
        <name>GTP</name>
        <dbReference type="ChEBI" id="CHEBI:37565"/>
    </ligand>
</feature>
<feature type="binding site" evidence="1">
    <location>
        <position position="40"/>
    </location>
    <ligand>
        <name>Mg(2+)</name>
        <dbReference type="ChEBI" id="CHEBI:18420"/>
    </ligand>
</feature>
<feature type="binding site" description="in other chain" evidence="1">
    <location>
        <position position="130"/>
    </location>
    <ligand>
        <name>IMP</name>
        <dbReference type="ChEBI" id="CHEBI:58053"/>
        <note>ligand shared between dimeric partners</note>
    </ligand>
</feature>
<feature type="binding site" evidence="1">
    <location>
        <position position="144"/>
    </location>
    <ligand>
        <name>IMP</name>
        <dbReference type="ChEBI" id="CHEBI:58053"/>
        <note>ligand shared between dimeric partners</note>
    </ligand>
</feature>
<feature type="binding site" description="in other chain" evidence="1">
    <location>
        <position position="225"/>
    </location>
    <ligand>
        <name>IMP</name>
        <dbReference type="ChEBI" id="CHEBI:58053"/>
        <note>ligand shared between dimeric partners</note>
    </ligand>
</feature>
<feature type="binding site" description="in other chain" evidence="1">
    <location>
        <position position="240"/>
    </location>
    <ligand>
        <name>IMP</name>
        <dbReference type="ChEBI" id="CHEBI:58053"/>
        <note>ligand shared between dimeric partners</note>
    </ligand>
</feature>
<feature type="binding site" evidence="1">
    <location>
        <begin position="300"/>
        <end position="306"/>
    </location>
    <ligand>
        <name>substrate</name>
    </ligand>
</feature>
<feature type="binding site" description="in other chain" evidence="1">
    <location>
        <position position="304"/>
    </location>
    <ligand>
        <name>IMP</name>
        <dbReference type="ChEBI" id="CHEBI:58053"/>
        <note>ligand shared between dimeric partners</note>
    </ligand>
</feature>
<feature type="binding site" evidence="1">
    <location>
        <position position="306"/>
    </location>
    <ligand>
        <name>GTP</name>
        <dbReference type="ChEBI" id="CHEBI:37565"/>
    </ligand>
</feature>
<feature type="binding site" evidence="1">
    <location>
        <begin position="332"/>
        <end position="334"/>
    </location>
    <ligand>
        <name>GTP</name>
        <dbReference type="ChEBI" id="CHEBI:37565"/>
    </ligand>
</feature>
<feature type="binding site" evidence="1">
    <location>
        <begin position="414"/>
        <end position="416"/>
    </location>
    <ligand>
        <name>GTP</name>
        <dbReference type="ChEBI" id="CHEBI:37565"/>
    </ligand>
</feature>
<reference key="1">
    <citation type="journal article" date="2007" name="PLoS ONE">
        <title>Analysis of the neurotoxin complex genes in Clostridium botulinum A1-A4 and B1 strains: BoNT/A3, /Ba4 and /B1 clusters are located within plasmids.</title>
        <authorList>
            <person name="Smith T.J."/>
            <person name="Hill K.K."/>
            <person name="Foley B.T."/>
            <person name="Detter J.C."/>
            <person name="Munk A.C."/>
            <person name="Bruce D.C."/>
            <person name="Doggett N.A."/>
            <person name="Smith L.A."/>
            <person name="Marks J.D."/>
            <person name="Xie G."/>
            <person name="Brettin T.S."/>
        </authorList>
    </citation>
    <scope>NUCLEOTIDE SEQUENCE [LARGE SCALE GENOMIC DNA]</scope>
    <source>
        <strain>Okra / Type B1</strain>
    </source>
</reference>
<accession>B1IHP2</accession>
<keyword id="KW-0963">Cytoplasm</keyword>
<keyword id="KW-0342">GTP-binding</keyword>
<keyword id="KW-0436">Ligase</keyword>
<keyword id="KW-0460">Magnesium</keyword>
<keyword id="KW-0479">Metal-binding</keyword>
<keyword id="KW-0547">Nucleotide-binding</keyword>
<keyword id="KW-0658">Purine biosynthesis</keyword>
<dbReference type="EC" id="6.3.4.4" evidence="1"/>
<dbReference type="EMBL" id="CP000939">
    <property type="protein sequence ID" value="ACA46698.1"/>
    <property type="molecule type" value="Genomic_DNA"/>
</dbReference>
<dbReference type="RefSeq" id="WP_003398908.1">
    <property type="nucleotide sequence ID" value="NC_010516.1"/>
</dbReference>
<dbReference type="SMR" id="B1IHP2"/>
<dbReference type="KEGG" id="cbb:CLD_0858"/>
<dbReference type="HOGENOM" id="CLU_029848_0_0_9"/>
<dbReference type="UniPathway" id="UPA00075">
    <property type="reaction ID" value="UER00335"/>
</dbReference>
<dbReference type="Proteomes" id="UP000008541">
    <property type="component" value="Chromosome"/>
</dbReference>
<dbReference type="GO" id="GO:0005737">
    <property type="term" value="C:cytoplasm"/>
    <property type="evidence" value="ECO:0007669"/>
    <property type="project" value="UniProtKB-SubCell"/>
</dbReference>
<dbReference type="GO" id="GO:0004019">
    <property type="term" value="F:adenylosuccinate synthase activity"/>
    <property type="evidence" value="ECO:0007669"/>
    <property type="project" value="UniProtKB-UniRule"/>
</dbReference>
<dbReference type="GO" id="GO:0005525">
    <property type="term" value="F:GTP binding"/>
    <property type="evidence" value="ECO:0007669"/>
    <property type="project" value="UniProtKB-UniRule"/>
</dbReference>
<dbReference type="GO" id="GO:0000287">
    <property type="term" value="F:magnesium ion binding"/>
    <property type="evidence" value="ECO:0007669"/>
    <property type="project" value="UniProtKB-UniRule"/>
</dbReference>
<dbReference type="GO" id="GO:0044208">
    <property type="term" value="P:'de novo' AMP biosynthetic process"/>
    <property type="evidence" value="ECO:0007669"/>
    <property type="project" value="UniProtKB-UniRule"/>
</dbReference>
<dbReference type="GO" id="GO:0046040">
    <property type="term" value="P:IMP metabolic process"/>
    <property type="evidence" value="ECO:0007669"/>
    <property type="project" value="TreeGrafter"/>
</dbReference>
<dbReference type="CDD" id="cd03108">
    <property type="entry name" value="AdSS"/>
    <property type="match status" value="1"/>
</dbReference>
<dbReference type="FunFam" id="1.10.300.10:FF:000001">
    <property type="entry name" value="Adenylosuccinate synthetase"/>
    <property type="match status" value="1"/>
</dbReference>
<dbReference type="FunFam" id="3.90.170.10:FF:000001">
    <property type="entry name" value="Adenylosuccinate synthetase"/>
    <property type="match status" value="1"/>
</dbReference>
<dbReference type="Gene3D" id="3.40.440.10">
    <property type="entry name" value="Adenylosuccinate Synthetase, subunit A, domain 1"/>
    <property type="match status" value="1"/>
</dbReference>
<dbReference type="Gene3D" id="1.10.300.10">
    <property type="entry name" value="Adenylosuccinate Synthetase, subunit A, domain 2"/>
    <property type="match status" value="1"/>
</dbReference>
<dbReference type="Gene3D" id="3.90.170.10">
    <property type="entry name" value="Adenylosuccinate Synthetase, subunit A, domain 3"/>
    <property type="match status" value="1"/>
</dbReference>
<dbReference type="HAMAP" id="MF_00011">
    <property type="entry name" value="Adenylosucc_synth"/>
    <property type="match status" value="1"/>
</dbReference>
<dbReference type="InterPro" id="IPR018220">
    <property type="entry name" value="Adenylosuccin_syn_GTP-bd"/>
</dbReference>
<dbReference type="InterPro" id="IPR033128">
    <property type="entry name" value="Adenylosuccin_syn_Lys_AS"/>
</dbReference>
<dbReference type="InterPro" id="IPR042109">
    <property type="entry name" value="Adenylosuccinate_synth_dom1"/>
</dbReference>
<dbReference type="InterPro" id="IPR042110">
    <property type="entry name" value="Adenylosuccinate_synth_dom2"/>
</dbReference>
<dbReference type="InterPro" id="IPR042111">
    <property type="entry name" value="Adenylosuccinate_synth_dom3"/>
</dbReference>
<dbReference type="InterPro" id="IPR001114">
    <property type="entry name" value="Adenylosuccinate_synthetase"/>
</dbReference>
<dbReference type="InterPro" id="IPR027417">
    <property type="entry name" value="P-loop_NTPase"/>
</dbReference>
<dbReference type="NCBIfam" id="NF002223">
    <property type="entry name" value="PRK01117.1"/>
    <property type="match status" value="1"/>
</dbReference>
<dbReference type="NCBIfam" id="TIGR00184">
    <property type="entry name" value="purA"/>
    <property type="match status" value="1"/>
</dbReference>
<dbReference type="PANTHER" id="PTHR11846">
    <property type="entry name" value="ADENYLOSUCCINATE SYNTHETASE"/>
    <property type="match status" value="1"/>
</dbReference>
<dbReference type="PANTHER" id="PTHR11846:SF0">
    <property type="entry name" value="ADENYLOSUCCINATE SYNTHETASE"/>
    <property type="match status" value="1"/>
</dbReference>
<dbReference type="Pfam" id="PF00709">
    <property type="entry name" value="Adenylsucc_synt"/>
    <property type="match status" value="1"/>
</dbReference>
<dbReference type="SMART" id="SM00788">
    <property type="entry name" value="Adenylsucc_synt"/>
    <property type="match status" value="1"/>
</dbReference>
<dbReference type="SUPFAM" id="SSF52540">
    <property type="entry name" value="P-loop containing nucleoside triphosphate hydrolases"/>
    <property type="match status" value="1"/>
</dbReference>
<dbReference type="PROSITE" id="PS01266">
    <property type="entry name" value="ADENYLOSUCCIN_SYN_1"/>
    <property type="match status" value="1"/>
</dbReference>
<dbReference type="PROSITE" id="PS00513">
    <property type="entry name" value="ADENYLOSUCCIN_SYN_2"/>
    <property type="match status" value="1"/>
</dbReference>
<protein>
    <recommendedName>
        <fullName evidence="1">Adenylosuccinate synthetase</fullName>
        <shortName evidence="1">AMPSase</shortName>
        <shortName evidence="1">AdSS</shortName>
        <ecNumber evidence="1">6.3.4.4</ecNumber>
    </recommendedName>
    <alternativeName>
        <fullName evidence="1">IMP--aspartate ligase</fullName>
    </alternativeName>
</protein>
<sequence>MSAFIVLGAQWGDEGKGKMTDYLAENADVVVRFQGGNNAGHTVVVGEKEYKLHLIPSGILYNDKLNVIGNGVVLDPKALFEEINYLESLGVEITPDRLIISDRAHVIMPYHRVLDGIKERARGNKDIGTTGKGIGPSYTDKMERSGIRVCDLIHKEVFEENLKETLEVKNKIITEVFGGEALDYNEIYNEYLGYAEKLRPFVKDISVIVNKKIKDGKEVLFEGAQGTLLDIDYGTYPYVTSSSTIAGGVCIGAGVGPTAITNAVGIAKAYTTRVGKGPFPTELLDSTGDWVREKGHEFGVTTGRARRCGWLDLVILKTSARISGLTSFAVTKIDTLAGLDTLKVCTGYRLNGEIIDYVPASLEDLAKCEPIYEEFEGWDDSIANARCYEDLPENAIKYLKKIEDFTETKVSIVSVGPKRDQTMMISEI</sequence>
<organism>
    <name type="scientific">Clostridium botulinum (strain Okra / Type B1)</name>
    <dbReference type="NCBI Taxonomy" id="498213"/>
    <lineage>
        <taxon>Bacteria</taxon>
        <taxon>Bacillati</taxon>
        <taxon>Bacillota</taxon>
        <taxon>Clostridia</taxon>
        <taxon>Eubacteriales</taxon>
        <taxon>Clostridiaceae</taxon>
        <taxon>Clostridium</taxon>
    </lineage>
</organism>